<evidence type="ECO:0000255" key="1">
    <source>
        <dbReference type="HAMAP-Rule" id="MF_01329"/>
    </source>
</evidence>
<evidence type="ECO:0000305" key="2"/>
<name>PSB30_EUGMY</name>
<keyword id="KW-0150">Chloroplast</keyword>
<keyword id="KW-0472">Membrane</keyword>
<keyword id="KW-0602">Photosynthesis</keyword>
<keyword id="KW-0604">Photosystem II</keyword>
<keyword id="KW-0934">Plastid</keyword>
<keyword id="KW-0793">Thylakoid</keyword>
<keyword id="KW-0812">Transmembrane</keyword>
<keyword id="KW-1133">Transmembrane helix</keyword>
<accession>Q9MS63</accession>
<geneLocation type="chloroplast"/>
<dbReference type="EMBL" id="AF241281">
    <property type="protein sequence ID" value="AAF82455.1"/>
    <property type="molecule type" value="Genomic_DNA"/>
</dbReference>
<dbReference type="EMBL" id="AY290861">
    <property type="protein sequence ID" value="AAQ84051.1"/>
    <property type="molecule type" value="Genomic_DNA"/>
</dbReference>
<dbReference type="SMR" id="Q9MS63"/>
<dbReference type="GO" id="GO:0009535">
    <property type="term" value="C:chloroplast thylakoid membrane"/>
    <property type="evidence" value="ECO:0007669"/>
    <property type="project" value="UniProtKB-SubCell"/>
</dbReference>
<dbReference type="GO" id="GO:0009523">
    <property type="term" value="C:photosystem II"/>
    <property type="evidence" value="ECO:0007669"/>
    <property type="project" value="UniProtKB-KW"/>
</dbReference>
<dbReference type="GO" id="GO:0015979">
    <property type="term" value="P:photosynthesis"/>
    <property type="evidence" value="ECO:0007669"/>
    <property type="project" value="UniProtKB-KW"/>
</dbReference>
<dbReference type="HAMAP" id="MF_01329">
    <property type="entry name" value="PSII_Psb30_Ycf12"/>
    <property type="match status" value="1"/>
</dbReference>
<dbReference type="InterPro" id="IPR010284">
    <property type="entry name" value="PSII_Ycf12_core-subunit"/>
</dbReference>
<dbReference type="NCBIfam" id="NF010239">
    <property type="entry name" value="PRK13686.1"/>
    <property type="match status" value="1"/>
</dbReference>
<dbReference type="Pfam" id="PF05969">
    <property type="entry name" value="PSII_Ycf12"/>
    <property type="match status" value="1"/>
</dbReference>
<protein>
    <recommendedName>
        <fullName evidence="1">Photosystem II reaction center protein Psb30</fullName>
    </recommendedName>
    <alternativeName>
        <fullName evidence="1">Photosystem II reaction center protein Ycf12</fullName>
    </alternativeName>
</protein>
<proteinExistence type="inferred from homology"/>
<feature type="chain" id="PRO_0000059023" description="Photosystem II reaction center protein Psb30">
    <location>
        <begin position="1"/>
        <end position="33"/>
    </location>
</feature>
<feature type="transmembrane region" description="Helical" evidence="1">
    <location>
        <begin position="5"/>
        <end position="25"/>
    </location>
</feature>
<comment type="function">
    <text evidence="1">A core subunit of photosystem II (PSII), probably helps stabilize the reaction center.</text>
</comment>
<comment type="subunit">
    <text evidence="2">PSII is composed of 1 copy each of membrane proteins PsbA, PsbB, PsbC, PsbD, PsbE, PsbF, PsbH, PsbI, PsbJ, PsbK, PsbL, PsbM, PsbT, PsbY, PsbZ, Psb30/Ycf12, peripheral proteins of the oxygen-evolving complex and a large number of cofactors. It forms dimeric complexes.</text>
</comment>
<comment type="subcellular location">
    <subcellularLocation>
        <location evidence="1">Plastid</location>
        <location evidence="1">Chloroplast thylakoid membrane</location>
        <topology evidence="1">Single-pass membrane protein</topology>
    </subcellularLocation>
</comment>
<comment type="similarity">
    <text evidence="1">Belongs to the Psb30/Ycf12 family.</text>
</comment>
<organism>
    <name type="scientific">Euglena myxocylindracea</name>
    <dbReference type="NCBI Taxonomy" id="38276"/>
    <lineage>
        <taxon>Eukaryota</taxon>
        <taxon>Discoba</taxon>
        <taxon>Euglenozoa</taxon>
        <taxon>Euglenida</taxon>
        <taxon>Spirocuta</taxon>
        <taxon>Euglenophyceae</taxon>
        <taxon>Euglenales</taxon>
        <taxon>Euglenaceae</taxon>
        <taxon>Euglena</taxon>
    </lineage>
</organism>
<gene>
    <name evidence="1" type="primary">psb30</name>
    <name evidence="1" type="synonym">ycf12</name>
</gene>
<sequence>MNIELIVQLTSLILISIAGPIIIALLFVKQGNL</sequence>
<reference key="1">
    <citation type="journal article" date="2001" name="Mol. Gen. Genet.">
        <title>Comparison of psbK operon organization and group III intron content in chloroplast genomes of 12 Euglenoid species.</title>
        <authorList>
            <person name="Doetsch N.A."/>
            <person name="Thompson M.D."/>
            <person name="Favreau M.R."/>
            <person name="Hallick R.B."/>
        </authorList>
    </citation>
    <scope>NUCLEOTIDE SEQUENCE [GENOMIC DNA]</scope>
    <source>
        <strain>UTEX 1989</strain>
    </source>
</reference>
<reference key="2">
    <citation type="journal article" date="2004" name="Nucleic Acids Res.">
        <title>Recent horizontal intron transfer to a chloroplast genome.</title>
        <authorList>
            <person name="Sheveleva E.V."/>
            <person name="Hallick R.B."/>
        </authorList>
    </citation>
    <scope>NUCLEOTIDE SEQUENCE [GENOMIC DNA]</scope>
    <source>
        <strain>UTEX 1989</strain>
    </source>
</reference>